<name>JASON_ARATH</name>
<reference key="1">
    <citation type="journal article" date="2000" name="Nature">
        <title>Sequence and analysis of chromosome 1 of the plant Arabidopsis thaliana.</title>
        <authorList>
            <person name="Theologis A."/>
            <person name="Ecker J.R."/>
            <person name="Palm C.J."/>
            <person name="Federspiel N.A."/>
            <person name="Kaul S."/>
            <person name="White O."/>
            <person name="Alonso J."/>
            <person name="Altafi H."/>
            <person name="Araujo R."/>
            <person name="Bowman C.L."/>
            <person name="Brooks S.Y."/>
            <person name="Buehler E."/>
            <person name="Chan A."/>
            <person name="Chao Q."/>
            <person name="Chen H."/>
            <person name="Cheuk R.F."/>
            <person name="Chin C.W."/>
            <person name="Chung M.K."/>
            <person name="Conn L."/>
            <person name="Conway A.B."/>
            <person name="Conway A.R."/>
            <person name="Creasy T.H."/>
            <person name="Dewar K."/>
            <person name="Dunn P."/>
            <person name="Etgu P."/>
            <person name="Feldblyum T.V."/>
            <person name="Feng J.-D."/>
            <person name="Fong B."/>
            <person name="Fujii C.Y."/>
            <person name="Gill J.E."/>
            <person name="Goldsmith A.D."/>
            <person name="Haas B."/>
            <person name="Hansen N.F."/>
            <person name="Hughes B."/>
            <person name="Huizar L."/>
            <person name="Hunter J.L."/>
            <person name="Jenkins J."/>
            <person name="Johnson-Hopson C."/>
            <person name="Khan S."/>
            <person name="Khaykin E."/>
            <person name="Kim C.J."/>
            <person name="Koo H.L."/>
            <person name="Kremenetskaia I."/>
            <person name="Kurtz D.B."/>
            <person name="Kwan A."/>
            <person name="Lam B."/>
            <person name="Langin-Hooper S."/>
            <person name="Lee A."/>
            <person name="Lee J.M."/>
            <person name="Lenz C.A."/>
            <person name="Li J.H."/>
            <person name="Li Y.-P."/>
            <person name="Lin X."/>
            <person name="Liu S.X."/>
            <person name="Liu Z.A."/>
            <person name="Luros J.S."/>
            <person name="Maiti R."/>
            <person name="Marziali A."/>
            <person name="Militscher J."/>
            <person name="Miranda M."/>
            <person name="Nguyen M."/>
            <person name="Nierman W.C."/>
            <person name="Osborne B.I."/>
            <person name="Pai G."/>
            <person name="Peterson J."/>
            <person name="Pham P.K."/>
            <person name="Rizzo M."/>
            <person name="Rooney T."/>
            <person name="Rowley D."/>
            <person name="Sakano H."/>
            <person name="Salzberg S.L."/>
            <person name="Schwartz J.R."/>
            <person name="Shinn P."/>
            <person name="Southwick A.M."/>
            <person name="Sun H."/>
            <person name="Tallon L.J."/>
            <person name="Tambunga G."/>
            <person name="Toriumi M.J."/>
            <person name="Town C.D."/>
            <person name="Utterback T."/>
            <person name="Van Aken S."/>
            <person name="Vaysberg M."/>
            <person name="Vysotskaia V.S."/>
            <person name="Walker M."/>
            <person name="Wu D."/>
            <person name="Yu G."/>
            <person name="Fraser C.M."/>
            <person name="Venter J.C."/>
            <person name="Davis R.W."/>
        </authorList>
    </citation>
    <scope>NUCLEOTIDE SEQUENCE [LARGE SCALE GENOMIC DNA]</scope>
    <source>
        <strain>cv. Columbia</strain>
    </source>
</reference>
<reference key="2">
    <citation type="journal article" date="2017" name="Plant J.">
        <title>Araport11: a complete reannotation of the Arabidopsis thaliana reference genome.</title>
        <authorList>
            <person name="Cheng C.Y."/>
            <person name="Krishnakumar V."/>
            <person name="Chan A.P."/>
            <person name="Thibaud-Nissen F."/>
            <person name="Schobel S."/>
            <person name="Town C.D."/>
        </authorList>
    </citation>
    <scope>GENOME REANNOTATION</scope>
    <source>
        <strain>cv. Columbia</strain>
    </source>
</reference>
<reference key="3">
    <citation type="journal article" date="2004" name="Genome Res.">
        <title>Whole genome sequence comparisons and 'full-length' cDNA sequences: a combined approach to evaluate and improve Arabidopsis genome annotation.</title>
        <authorList>
            <person name="Castelli V."/>
            <person name="Aury J.-M."/>
            <person name="Jaillon O."/>
            <person name="Wincker P."/>
            <person name="Clepet C."/>
            <person name="Menard M."/>
            <person name="Cruaud C."/>
            <person name="Quetier F."/>
            <person name="Scarpelli C."/>
            <person name="Schaechter V."/>
            <person name="Temple G."/>
            <person name="Caboche M."/>
            <person name="Weissenbach J."/>
            <person name="Salanoubat M."/>
        </authorList>
    </citation>
    <scope>NUCLEOTIDE SEQUENCE [LARGE SCALE MRNA]</scope>
    <source>
        <strain>cv. Columbia</strain>
    </source>
</reference>
<reference key="4">
    <citation type="journal article" date="2003" name="Science">
        <title>Empirical analysis of transcriptional activity in the Arabidopsis genome.</title>
        <authorList>
            <person name="Yamada K."/>
            <person name="Lim J."/>
            <person name="Dale J.M."/>
            <person name="Chen H."/>
            <person name="Shinn P."/>
            <person name="Palm C.J."/>
            <person name="Southwick A.M."/>
            <person name="Wu H.C."/>
            <person name="Kim C.J."/>
            <person name="Nguyen M."/>
            <person name="Pham P.K."/>
            <person name="Cheuk R.F."/>
            <person name="Karlin-Newmann G."/>
            <person name="Liu S.X."/>
            <person name="Lam B."/>
            <person name="Sakano H."/>
            <person name="Wu T."/>
            <person name="Yu G."/>
            <person name="Miranda M."/>
            <person name="Quach H.L."/>
            <person name="Tripp M."/>
            <person name="Chang C.H."/>
            <person name="Lee J.M."/>
            <person name="Toriumi M.J."/>
            <person name="Chan M.M."/>
            <person name="Tang C.C."/>
            <person name="Onodera C.S."/>
            <person name="Deng J.M."/>
            <person name="Akiyama K."/>
            <person name="Ansari Y."/>
            <person name="Arakawa T."/>
            <person name="Banh J."/>
            <person name="Banno F."/>
            <person name="Bowser L."/>
            <person name="Brooks S.Y."/>
            <person name="Carninci P."/>
            <person name="Chao Q."/>
            <person name="Choy N."/>
            <person name="Enju A."/>
            <person name="Goldsmith A.D."/>
            <person name="Gurjal M."/>
            <person name="Hansen N.F."/>
            <person name="Hayashizaki Y."/>
            <person name="Johnson-Hopson C."/>
            <person name="Hsuan V.W."/>
            <person name="Iida K."/>
            <person name="Karnes M."/>
            <person name="Khan S."/>
            <person name="Koesema E."/>
            <person name="Ishida J."/>
            <person name="Jiang P.X."/>
            <person name="Jones T."/>
            <person name="Kawai J."/>
            <person name="Kamiya A."/>
            <person name="Meyers C."/>
            <person name="Nakajima M."/>
            <person name="Narusaka M."/>
            <person name="Seki M."/>
            <person name="Sakurai T."/>
            <person name="Satou M."/>
            <person name="Tamse R."/>
            <person name="Vaysberg M."/>
            <person name="Wallender E.K."/>
            <person name="Wong C."/>
            <person name="Yamamura Y."/>
            <person name="Yuan S."/>
            <person name="Shinozaki K."/>
            <person name="Davis R.W."/>
            <person name="Theologis A."/>
            <person name="Ecker J.R."/>
        </authorList>
    </citation>
    <scope>NUCLEOTIDE SEQUENCE [LARGE SCALE MRNA] OF 145-481</scope>
    <source>
        <strain>cv. Columbia</strain>
    </source>
</reference>
<reference key="5">
    <citation type="journal article" date="2011" name="Plant Physiol.">
        <title>The Arabidopsis mutant jason produces unreduced first division restitution male gametes through a parallel/fused spindle mechanism in meiosis II.</title>
        <authorList>
            <person name="De Storme N."/>
            <person name="Geelen D."/>
        </authorList>
    </citation>
    <scope>FUNCTION</scope>
    <scope>DISRUPTION PHENOTYPE</scope>
</reference>
<accession>F4IDQ5</accession>
<accession>Q8RX34</accession>
<accession>Q9SHK5</accession>
<comment type="function">
    <text evidence="2">Required for normal spindle orientation at male meiosis II and normal formation of tetrad of microspores. Acts as a positive regulator of PS1 in male sporogenesis. Not involved in female meiosis.</text>
</comment>
<comment type="disruption phenotype">
    <text evidence="2">Diploid pollen grains (dyads of spores instead of tetrads) due to defective meiosis II. Abnormal spindle orientation at meiosis II.</text>
</comment>
<comment type="miscellaneous">
    <text evidence="2">Diploid male spores in jason mutants give rise to viable diploid pollen grains and spontaneous triploid plants in the next generation.</text>
</comment>
<comment type="sequence caution" evidence="4">
    <conflict type="erroneous gene model prediction">
        <sequence resource="EMBL-CDS" id="AAF24810"/>
    </conflict>
</comment>
<comment type="sequence caution" evidence="4">
    <conflict type="miscellaneous discrepancy">
        <sequence resource="EMBL" id="BX814233"/>
    </conflict>
    <text>Sequencing erros.</text>
</comment>
<dbReference type="EMBL" id="AC007592">
    <property type="protein sequence ID" value="AAF24810.1"/>
    <property type="status" value="ALT_SEQ"/>
    <property type="molecule type" value="Genomic_DNA"/>
</dbReference>
<dbReference type="EMBL" id="CP002684">
    <property type="protein sequence ID" value="AEE28020.1"/>
    <property type="molecule type" value="Genomic_DNA"/>
</dbReference>
<dbReference type="EMBL" id="BX814233">
    <property type="status" value="NOT_ANNOTATED_CDS"/>
    <property type="molecule type" value="mRNA"/>
</dbReference>
<dbReference type="EMBL" id="AY090923">
    <property type="protein sequence ID" value="AAM13918.1"/>
    <property type="molecule type" value="mRNA"/>
</dbReference>
<dbReference type="RefSeq" id="NP_172151.2">
    <property type="nucleotide sequence ID" value="NM_100543.5"/>
</dbReference>
<dbReference type="FunCoup" id="F4IDQ5">
    <property type="interactions" value="332"/>
</dbReference>
<dbReference type="STRING" id="3702.F4IDQ5"/>
<dbReference type="iPTMnet" id="F4IDQ5"/>
<dbReference type="PaxDb" id="3702-AT1G06660.1"/>
<dbReference type="ProteomicsDB" id="238984"/>
<dbReference type="EnsemblPlants" id="AT1G06660.1">
    <property type="protein sequence ID" value="AT1G06660.1"/>
    <property type="gene ID" value="AT1G06660"/>
</dbReference>
<dbReference type="GeneID" id="837176"/>
<dbReference type="Gramene" id="AT1G06660.1">
    <property type="protein sequence ID" value="AT1G06660.1"/>
    <property type="gene ID" value="AT1G06660"/>
</dbReference>
<dbReference type="KEGG" id="ath:AT1G06660"/>
<dbReference type="Araport" id="AT1G06660"/>
<dbReference type="TAIR" id="AT1G06660">
    <property type="gene designation" value="JASON"/>
</dbReference>
<dbReference type="eggNOG" id="ENOG502QUII">
    <property type="taxonomic scope" value="Eukaryota"/>
</dbReference>
<dbReference type="HOGENOM" id="CLU_034423_1_0_1"/>
<dbReference type="InParanoid" id="F4IDQ5"/>
<dbReference type="OMA" id="MACFLDC"/>
<dbReference type="OrthoDB" id="1932581at2759"/>
<dbReference type="PRO" id="PR:F4IDQ5"/>
<dbReference type="Proteomes" id="UP000006548">
    <property type="component" value="Chromosome 1"/>
</dbReference>
<dbReference type="ExpressionAtlas" id="F4IDQ5">
    <property type="expression patterns" value="baseline and differential"/>
</dbReference>
<dbReference type="GO" id="GO:0007142">
    <property type="term" value="P:male meiosis II"/>
    <property type="evidence" value="ECO:0000315"/>
    <property type="project" value="TAIR"/>
</dbReference>
<dbReference type="GO" id="GO:0009556">
    <property type="term" value="P:microsporogenesis"/>
    <property type="evidence" value="ECO:0000315"/>
    <property type="project" value="TAIR"/>
</dbReference>
<dbReference type="GO" id="GO:0006355">
    <property type="term" value="P:regulation of DNA-templated transcription"/>
    <property type="evidence" value="ECO:0000270"/>
    <property type="project" value="TAIR"/>
</dbReference>
<dbReference type="InterPro" id="IPR039300">
    <property type="entry name" value="JASON"/>
</dbReference>
<dbReference type="PANTHER" id="PTHR33318">
    <property type="entry name" value="ASPARTYL/GLUTAMYL-TRNA(ASN/GLN) AMIDOTRANSFERASE SUBUNIT"/>
    <property type="match status" value="1"/>
</dbReference>
<dbReference type="PANTHER" id="PTHR33318:SF7">
    <property type="entry name" value="PROTEIN JASON"/>
    <property type="match status" value="1"/>
</dbReference>
<feature type="chain" id="PRO_0000433006" description="Protein JASON">
    <location>
        <begin position="1"/>
        <end position="481"/>
    </location>
</feature>
<feature type="region of interest" description="Disordered" evidence="1">
    <location>
        <begin position="226"/>
        <end position="250"/>
    </location>
</feature>
<feature type="compositionally biased region" description="Low complexity" evidence="1">
    <location>
        <begin position="232"/>
        <end position="241"/>
    </location>
</feature>
<sequence>MRRLLMNRNLSPLCRSVLRFIDLSVCRAMACFLDCFRARDNRSTSNLVSHSSLANSRKAQDSQNDLSALFLSEEKSASSPCLDKERFDLDSIHIDKGLRDEARFLKACGTIPETPIEIRKASQKLSPQHSGSSHFHSWISSSSSMGSRLAESSTPMKACEEVGRPSFTSEQTASSCVIDVRDNARISSASSDGTEVESVGTAIKGELDRTARPTFTAGKNKSVRFECDLDQSNSSNSSENGSSRKPEMGGKICFTVSSPNPTPLKLSDEMQTPGTIYPANMESGGRGRPRIRSQFVHSVSNIMENASLYKVYKDSHEGLDYEEQIEAETPSSETYGEKVEESSDEKLSKFEASFSPWLNQINENIAALNERTPGVGVITPGDRPIIGLVAAQWIENEQTEISPKMWDGNGIPNSTTKYKEDQKVSWHATPFEVRLEKALSEEGGQSLFPQRKLEVMMEEVEGDTDISQLHHSVQPNSVVSF</sequence>
<evidence type="ECO:0000256" key="1">
    <source>
        <dbReference type="SAM" id="MobiDB-lite"/>
    </source>
</evidence>
<evidence type="ECO:0000269" key="2">
    <source>
    </source>
</evidence>
<evidence type="ECO:0000303" key="3">
    <source>
    </source>
</evidence>
<evidence type="ECO:0000305" key="4"/>
<evidence type="ECO:0000312" key="5">
    <source>
        <dbReference type="Araport" id="AT1G06660"/>
    </source>
</evidence>
<evidence type="ECO:0000312" key="6">
    <source>
        <dbReference type="EMBL" id="AAF24810.1"/>
    </source>
</evidence>
<keyword id="KW-0469">Meiosis</keyword>
<keyword id="KW-1185">Reference proteome</keyword>
<gene>
    <name evidence="3" type="primary">JASON</name>
    <name evidence="5" type="ordered locus">At1g06660</name>
    <name evidence="6" type="ORF">F12K11.5</name>
</gene>
<protein>
    <recommendedName>
        <fullName evidence="4">Protein JASON</fullName>
    </recommendedName>
</protein>
<proteinExistence type="evidence at transcript level"/>
<organism>
    <name type="scientific">Arabidopsis thaliana</name>
    <name type="common">Mouse-ear cress</name>
    <dbReference type="NCBI Taxonomy" id="3702"/>
    <lineage>
        <taxon>Eukaryota</taxon>
        <taxon>Viridiplantae</taxon>
        <taxon>Streptophyta</taxon>
        <taxon>Embryophyta</taxon>
        <taxon>Tracheophyta</taxon>
        <taxon>Spermatophyta</taxon>
        <taxon>Magnoliopsida</taxon>
        <taxon>eudicotyledons</taxon>
        <taxon>Gunneridae</taxon>
        <taxon>Pentapetalae</taxon>
        <taxon>rosids</taxon>
        <taxon>malvids</taxon>
        <taxon>Brassicales</taxon>
        <taxon>Brassicaceae</taxon>
        <taxon>Camelineae</taxon>
        <taxon>Arabidopsis</taxon>
    </lineage>
</organism>